<keyword id="KW-0067">ATP-binding</keyword>
<keyword id="KW-0963">Cytoplasm</keyword>
<keyword id="KW-0418">Kinase</keyword>
<keyword id="KW-0460">Magnesium</keyword>
<keyword id="KW-0479">Metal-binding</keyword>
<keyword id="KW-0547">Nucleotide-binding</keyword>
<keyword id="KW-1185">Reference proteome</keyword>
<keyword id="KW-0808">Transferase</keyword>
<organism>
    <name type="scientific">Gloeothece citriformis (strain PCC 7424)</name>
    <name type="common">Cyanothece sp. (strain PCC 7424)</name>
    <dbReference type="NCBI Taxonomy" id="65393"/>
    <lineage>
        <taxon>Bacteria</taxon>
        <taxon>Bacillati</taxon>
        <taxon>Cyanobacteriota</taxon>
        <taxon>Cyanophyceae</taxon>
        <taxon>Oscillatoriophycideae</taxon>
        <taxon>Chroococcales</taxon>
        <taxon>Aphanothecaceae</taxon>
        <taxon>Gloeothece</taxon>
        <taxon>Gloeothece citriformis</taxon>
    </lineage>
</organism>
<evidence type="ECO:0000255" key="1">
    <source>
        <dbReference type="HAMAP-Rule" id="MF_00020"/>
    </source>
</evidence>
<accession>B7KGG9</accession>
<proteinExistence type="inferred from homology"/>
<feature type="chain" id="PRO_1000116387" description="Acetate kinase">
    <location>
        <begin position="1"/>
        <end position="405"/>
    </location>
</feature>
<feature type="active site" description="Proton donor/acceptor" evidence="1">
    <location>
        <position position="155"/>
    </location>
</feature>
<feature type="binding site" evidence="1">
    <location>
        <position position="7"/>
    </location>
    <ligand>
        <name>Mg(2+)</name>
        <dbReference type="ChEBI" id="CHEBI:18420"/>
    </ligand>
</feature>
<feature type="binding site" evidence="1">
    <location>
        <position position="14"/>
    </location>
    <ligand>
        <name>ATP</name>
        <dbReference type="ChEBI" id="CHEBI:30616"/>
    </ligand>
</feature>
<feature type="binding site" evidence="1">
    <location>
        <position position="98"/>
    </location>
    <ligand>
        <name>substrate</name>
    </ligand>
</feature>
<feature type="binding site" evidence="1">
    <location>
        <begin position="214"/>
        <end position="218"/>
    </location>
    <ligand>
        <name>ATP</name>
        <dbReference type="ChEBI" id="CHEBI:30616"/>
    </ligand>
</feature>
<feature type="binding site" evidence="1">
    <location>
        <begin position="289"/>
        <end position="291"/>
    </location>
    <ligand>
        <name>ATP</name>
        <dbReference type="ChEBI" id="CHEBI:30616"/>
    </ligand>
</feature>
<feature type="binding site" evidence="1">
    <location>
        <begin position="337"/>
        <end position="341"/>
    </location>
    <ligand>
        <name>ATP</name>
        <dbReference type="ChEBI" id="CHEBI:30616"/>
    </ligand>
</feature>
<feature type="binding site" evidence="1">
    <location>
        <position position="390"/>
    </location>
    <ligand>
        <name>Mg(2+)</name>
        <dbReference type="ChEBI" id="CHEBI:18420"/>
    </ligand>
</feature>
<feature type="site" description="Transition state stabilizer" evidence="1">
    <location>
        <position position="186"/>
    </location>
</feature>
<feature type="site" description="Transition state stabilizer" evidence="1">
    <location>
        <position position="247"/>
    </location>
</feature>
<dbReference type="EC" id="2.7.2.1" evidence="1"/>
<dbReference type="EMBL" id="CP001291">
    <property type="protein sequence ID" value="ACK71896.1"/>
    <property type="molecule type" value="Genomic_DNA"/>
</dbReference>
<dbReference type="RefSeq" id="WP_015955489.1">
    <property type="nucleotide sequence ID" value="NC_011729.1"/>
</dbReference>
<dbReference type="SMR" id="B7KGG9"/>
<dbReference type="STRING" id="65393.PCC7424_3504"/>
<dbReference type="KEGG" id="cyc:PCC7424_3504"/>
<dbReference type="eggNOG" id="COG0282">
    <property type="taxonomic scope" value="Bacteria"/>
</dbReference>
<dbReference type="HOGENOM" id="CLU_020352_0_1_3"/>
<dbReference type="OrthoDB" id="9802453at2"/>
<dbReference type="UniPathway" id="UPA00340">
    <property type="reaction ID" value="UER00458"/>
</dbReference>
<dbReference type="Proteomes" id="UP000002384">
    <property type="component" value="Chromosome"/>
</dbReference>
<dbReference type="GO" id="GO:0005737">
    <property type="term" value="C:cytoplasm"/>
    <property type="evidence" value="ECO:0007669"/>
    <property type="project" value="UniProtKB-SubCell"/>
</dbReference>
<dbReference type="GO" id="GO:0008776">
    <property type="term" value="F:acetate kinase activity"/>
    <property type="evidence" value="ECO:0007669"/>
    <property type="project" value="UniProtKB-UniRule"/>
</dbReference>
<dbReference type="GO" id="GO:0005524">
    <property type="term" value="F:ATP binding"/>
    <property type="evidence" value="ECO:0007669"/>
    <property type="project" value="UniProtKB-KW"/>
</dbReference>
<dbReference type="GO" id="GO:0000287">
    <property type="term" value="F:magnesium ion binding"/>
    <property type="evidence" value="ECO:0007669"/>
    <property type="project" value="UniProtKB-UniRule"/>
</dbReference>
<dbReference type="GO" id="GO:0006083">
    <property type="term" value="P:acetate metabolic process"/>
    <property type="evidence" value="ECO:0007669"/>
    <property type="project" value="TreeGrafter"/>
</dbReference>
<dbReference type="GO" id="GO:0006085">
    <property type="term" value="P:acetyl-CoA biosynthetic process"/>
    <property type="evidence" value="ECO:0007669"/>
    <property type="project" value="UniProtKB-UniRule"/>
</dbReference>
<dbReference type="CDD" id="cd24010">
    <property type="entry name" value="ASKHA_NBD_AcK_PK"/>
    <property type="match status" value="1"/>
</dbReference>
<dbReference type="Gene3D" id="3.30.420.40">
    <property type="match status" value="2"/>
</dbReference>
<dbReference type="HAMAP" id="MF_00020">
    <property type="entry name" value="Acetate_kinase"/>
    <property type="match status" value="1"/>
</dbReference>
<dbReference type="InterPro" id="IPR004372">
    <property type="entry name" value="Ac/propionate_kinase"/>
</dbReference>
<dbReference type="InterPro" id="IPR000890">
    <property type="entry name" value="Aliphatic_acid_kin_short-chain"/>
</dbReference>
<dbReference type="InterPro" id="IPR023865">
    <property type="entry name" value="Aliphatic_acid_kinase_CS"/>
</dbReference>
<dbReference type="InterPro" id="IPR043129">
    <property type="entry name" value="ATPase_NBD"/>
</dbReference>
<dbReference type="NCBIfam" id="TIGR00016">
    <property type="entry name" value="ackA"/>
    <property type="match status" value="1"/>
</dbReference>
<dbReference type="PANTHER" id="PTHR21060">
    <property type="entry name" value="ACETATE KINASE"/>
    <property type="match status" value="1"/>
</dbReference>
<dbReference type="PANTHER" id="PTHR21060:SF15">
    <property type="entry name" value="ACETATE KINASE-RELATED"/>
    <property type="match status" value="1"/>
</dbReference>
<dbReference type="Pfam" id="PF00871">
    <property type="entry name" value="Acetate_kinase"/>
    <property type="match status" value="1"/>
</dbReference>
<dbReference type="PIRSF" id="PIRSF000722">
    <property type="entry name" value="Acetate_prop_kin"/>
    <property type="match status" value="1"/>
</dbReference>
<dbReference type="PRINTS" id="PR00471">
    <property type="entry name" value="ACETATEKNASE"/>
</dbReference>
<dbReference type="SUPFAM" id="SSF53067">
    <property type="entry name" value="Actin-like ATPase domain"/>
    <property type="match status" value="2"/>
</dbReference>
<dbReference type="PROSITE" id="PS01075">
    <property type="entry name" value="ACETATE_KINASE_1"/>
    <property type="match status" value="1"/>
</dbReference>
<dbReference type="PROSITE" id="PS01076">
    <property type="entry name" value="ACETATE_KINASE_2"/>
    <property type="match status" value="1"/>
</dbReference>
<reference key="1">
    <citation type="journal article" date="2011" name="MBio">
        <title>Novel metabolic attributes of the genus Cyanothece, comprising a group of unicellular nitrogen-fixing Cyanobacteria.</title>
        <authorList>
            <person name="Bandyopadhyay A."/>
            <person name="Elvitigala T."/>
            <person name="Welsh E."/>
            <person name="Stockel J."/>
            <person name="Liberton M."/>
            <person name="Min H."/>
            <person name="Sherman L.A."/>
            <person name="Pakrasi H.B."/>
        </authorList>
    </citation>
    <scope>NUCLEOTIDE SEQUENCE [LARGE SCALE GENOMIC DNA]</scope>
    <source>
        <strain>PCC 7424</strain>
    </source>
</reference>
<protein>
    <recommendedName>
        <fullName evidence="1">Acetate kinase</fullName>
        <ecNumber evidence="1">2.7.2.1</ecNumber>
    </recommendedName>
    <alternativeName>
        <fullName evidence="1">Acetokinase</fullName>
    </alternativeName>
</protein>
<sequence length="405" mass="44269">MKILVLNAGSSTQKSCLYDLTGDTLPQAPPKPIWKGDIDWTIATDHGLLEIKANGVEKKLNLSADDHLKGMSQMLDSLVQGETKVIDDLSEIEIVGHRVVHGGLNYTQATLITQEVKQTIADLIPLAPTHNPAHLEGIETVEKLLGNVPQLAVFDTAFHSTLPLEVAAYPLPYEWLEKGLRRYGFHGISHQYCVHRAAELLGKPLNSLKLINCHLGNGCSLAAVKDGISINTTMGFTPLEGLMMGSRSGSIDPEIPIFLIRDHGFTPEDVITVLNKKSGLKGVSGVSSDLRAIQKAIQEGNEKAQLAFKMYIHRLRFYIGAMLASLGGLDALIFTAGVGENSSEVREQACEAFGFLGLKLDQAKNESRPVDEDIATPDSKVRVLVIHTEEDWAIAKECWHQLTQK</sequence>
<comment type="function">
    <text evidence="1">Catalyzes the formation of acetyl phosphate from acetate and ATP. Can also catalyze the reverse reaction.</text>
</comment>
<comment type="catalytic activity">
    <reaction evidence="1">
        <text>acetate + ATP = acetyl phosphate + ADP</text>
        <dbReference type="Rhea" id="RHEA:11352"/>
        <dbReference type="ChEBI" id="CHEBI:22191"/>
        <dbReference type="ChEBI" id="CHEBI:30089"/>
        <dbReference type="ChEBI" id="CHEBI:30616"/>
        <dbReference type="ChEBI" id="CHEBI:456216"/>
        <dbReference type="EC" id="2.7.2.1"/>
    </reaction>
</comment>
<comment type="cofactor">
    <cofactor evidence="1">
        <name>Mg(2+)</name>
        <dbReference type="ChEBI" id="CHEBI:18420"/>
    </cofactor>
    <cofactor evidence="1">
        <name>Mn(2+)</name>
        <dbReference type="ChEBI" id="CHEBI:29035"/>
    </cofactor>
    <text evidence="1">Mg(2+). Can also accept Mn(2+).</text>
</comment>
<comment type="pathway">
    <text evidence="1">Metabolic intermediate biosynthesis; acetyl-CoA biosynthesis; acetyl-CoA from acetate: step 1/2.</text>
</comment>
<comment type="subunit">
    <text evidence="1">Homodimer.</text>
</comment>
<comment type="subcellular location">
    <subcellularLocation>
        <location evidence="1">Cytoplasm</location>
    </subcellularLocation>
</comment>
<comment type="similarity">
    <text evidence="1">Belongs to the acetokinase family.</text>
</comment>
<gene>
    <name evidence="1" type="primary">ackA</name>
    <name type="ordered locus">PCC7424_3504</name>
</gene>
<name>ACKA_GLOC7</name>